<reference key="1">
    <citation type="submission" date="2007-02" db="EMBL/GenBank/DDBJ databases">
        <authorList>
            <consortium name="NIH - Mammalian Gene Collection (MGC) project"/>
        </authorList>
    </citation>
    <scope>NUCLEOTIDE SEQUENCE [LARGE SCALE MRNA]</scope>
    <source>
        <strain>Hereford</strain>
        <tissue>Thymus</tissue>
    </source>
</reference>
<proteinExistence type="evidence at transcript level"/>
<accession>A2VE44</accession>
<gene>
    <name type="primary">MED25</name>
</gene>
<evidence type="ECO:0000250" key="1"/>
<evidence type="ECO:0000250" key="2">
    <source>
        <dbReference type="UniProtKB" id="Q8VCB2"/>
    </source>
</evidence>
<evidence type="ECO:0000256" key="3">
    <source>
        <dbReference type="SAM" id="MobiDB-lite"/>
    </source>
</evidence>
<evidence type="ECO:0000305" key="4"/>
<sequence>MVPGSEGPARAGGLVADVVFVIEGTANLGPYFEGLRKHYLLPAIEYFNGGPPAETDFGGDYGGTQYSLVVFNTVDCAPESYVQCHAPTSSAYEFVTWLDGIKFMGGGGESCSLIAEGLSTALQLFDDFKKMREQIGQTHRVCLLICNSPPYLLPAVESTTYSGCTTETLVQKIGERGIYFSIVSPRKLPALRLLFEKAAPPAMLEPLQPPADVSQDPRHMVLVRGLVLPVGGGSAPGPLQPKQPVPLPPAAPAGATLSTAPQQPLPPVPQQYQVPGNLSAAQVAAQNAVEAAKNQKAGLGPRFSPINPLQQATPGVGPPYSQTQATQLPPGPPGAPKPPPASQPSLVSTVAPGPGLAPPAQPGAPSMAGTVAPGGVSGPSPAQLGAPALGGQQSVSNKLLAWSGVLEWQEKPKPASVDANTKLTRSLPCQVYVNHGENLKTEQWPQKLIMQLIPQQLLTTLGPLFRNSRMVQFHFTNKDLDSLKGLYRIMGNGFAGCVHFPHTAPCEVRVLMLLYSSKKKIFMGLIPYDQSGFVNGIRQVITNHKQVQQQKLEQQRGMGAQQAPPGLGPILEDQARPSQNLLQLRPPQPQPQGTVGASAAAGQPQPQGAAPAPPGAPQGPPGAAPGPPPPGPLLRPQNPGANPQLRSLLLNPPPPQTGVPPPQASLHHLQPPGAPALLPPPHQGLGQPQLGPPLLHPPPAQSWPAQLPPRASLPGQMLLSGGPRGPVPQPGLQPSVMEDDILMDLI</sequence>
<protein>
    <recommendedName>
        <fullName>Mediator of RNA polymerase II transcription subunit 25</fullName>
    </recommendedName>
    <alternativeName>
        <fullName>Mediator complex subunit 25</fullName>
    </alternativeName>
</protein>
<name>MED25_BOVIN</name>
<comment type="function">
    <text evidence="1">Component of the Mediator complex, a coactivator involved in the regulated transcription of nearly all RNA polymerase II-dependent genes. Mediator functions as a bridge to convey information from gene-specific regulatory proteins to the basal RNA polymerase II transcription machinery. Mediator is recruited to promoters by direct interactions with regulatory proteins and serves as a scaffold for the assembly of a functional preinitiation complex with RNA polymerase II and the general transcription factors. Required for RARA/RXRA-mediated transcription (By similarity).</text>
</comment>
<comment type="subunit">
    <text evidence="1">Component of the Mediator complex, which is composed of MED1, MED4, MED6, MED7, MED8, MED9, MED10, MED11, MED12, MED13, MED13L, MED14, MED15, MED16, MED17, MED18, MED19, MED20, MED21, MED22, MED23, MED24, MED25, MED26, MED27, MED29, MED30, MED31, CCNC, CDK8 and CDC2L6/CDK11. The MED12, MED13, CCNC and CDK8 subunits form a distinct module termed the CDK8 module. Mediator containing the CDK8 module is less active than Mediator lacking this module in supporting transcriptional activation. Individual preparations of the Mediator complex lacking one or more distinct subunits have been variously termed ARC, CRSP, DRIP, PC2, SMCC and TRAP. Interacts with CREBBP. Interacts with ESR1, GR, RARA, RXRA and THRB in a ligand-dependent fashion. Binds the Herpes simplex virus activator VP16 (By similarity).</text>
</comment>
<comment type="subcellular location">
    <subcellularLocation>
        <location evidence="1">Nucleus</location>
    </subcellularLocation>
</comment>
<comment type="similarity">
    <text evidence="4">Belongs to the Mediator complex subunit 25 family.</text>
</comment>
<dbReference type="EMBL" id="BC133565">
    <property type="protein sequence ID" value="AAI33566.1"/>
    <property type="molecule type" value="mRNA"/>
</dbReference>
<dbReference type="RefSeq" id="NP_001075914.1">
    <property type="nucleotide sequence ID" value="NM_001082445.1"/>
</dbReference>
<dbReference type="BMRB" id="A2VE44"/>
<dbReference type="SMR" id="A2VE44"/>
<dbReference type="FunCoup" id="A2VE44">
    <property type="interactions" value="2836"/>
</dbReference>
<dbReference type="STRING" id="9913.ENSBTAP00000040773"/>
<dbReference type="PaxDb" id="9913-ENSBTAP00000040773"/>
<dbReference type="Ensembl" id="ENSBTAT00000043183.4">
    <property type="protein sequence ID" value="ENSBTAP00000040773.4"/>
    <property type="gene ID" value="ENSBTAG00000008518.7"/>
</dbReference>
<dbReference type="GeneID" id="533865"/>
<dbReference type="KEGG" id="bta:533865"/>
<dbReference type="CTD" id="81857"/>
<dbReference type="VEuPathDB" id="HostDB:ENSBTAG00000008518"/>
<dbReference type="VGNC" id="VGNC:31362">
    <property type="gene designation" value="MED25"/>
</dbReference>
<dbReference type="eggNOG" id="ENOG502QRN5">
    <property type="taxonomic scope" value="Eukaryota"/>
</dbReference>
<dbReference type="GeneTree" id="ENSGT00940000160439"/>
<dbReference type="InParanoid" id="A2VE44"/>
<dbReference type="OMA" id="NDQQKIP"/>
<dbReference type="OrthoDB" id="7690434at2759"/>
<dbReference type="Reactome" id="R-BTA-212436">
    <property type="pathway name" value="Generic Transcription Pathway"/>
</dbReference>
<dbReference type="Proteomes" id="UP000009136">
    <property type="component" value="Chromosome 18"/>
</dbReference>
<dbReference type="Bgee" id="ENSBTAG00000008518">
    <property type="expression patterns" value="Expressed in laryngeal cartilage and 104 other cell types or tissues"/>
</dbReference>
<dbReference type="GO" id="GO:0016592">
    <property type="term" value="C:mediator complex"/>
    <property type="evidence" value="ECO:0000318"/>
    <property type="project" value="GO_Central"/>
</dbReference>
<dbReference type="GO" id="GO:0005667">
    <property type="term" value="C:transcription regulator complex"/>
    <property type="evidence" value="ECO:0000318"/>
    <property type="project" value="GO_Central"/>
</dbReference>
<dbReference type="GO" id="GO:0045944">
    <property type="term" value="P:positive regulation of transcription by RNA polymerase II"/>
    <property type="evidence" value="ECO:0000318"/>
    <property type="project" value="GO_Central"/>
</dbReference>
<dbReference type="FunFam" id="2.40.290.30:FF:000001">
    <property type="entry name" value="Mediator of RNA polymerase II transcription subunit 25"/>
    <property type="match status" value="1"/>
</dbReference>
<dbReference type="Gene3D" id="2.40.290.30">
    <property type="entry name" value="Mediator complex subunit 25, ACID domain"/>
    <property type="match status" value="1"/>
</dbReference>
<dbReference type="InterPro" id="IPR021394">
    <property type="entry name" value="Med25_PTOV"/>
</dbReference>
<dbReference type="InterPro" id="IPR038196">
    <property type="entry name" value="Med25_PTOV_sf"/>
</dbReference>
<dbReference type="InterPro" id="IPR021397">
    <property type="entry name" value="Mediator_Med25_SD1"/>
</dbReference>
<dbReference type="InterPro" id="IPR021419">
    <property type="entry name" value="Mediator_Med25_VWA"/>
</dbReference>
<dbReference type="InterPro" id="IPR036465">
    <property type="entry name" value="vWFA_dom_sf"/>
</dbReference>
<dbReference type="PANTHER" id="PTHR12433">
    <property type="entry name" value="MEDIATOR OF RNA POLYMERASE II TRANSCRIPTION SUBUNIT 25"/>
    <property type="match status" value="1"/>
</dbReference>
<dbReference type="PANTHER" id="PTHR12433:SF10">
    <property type="entry name" value="MEDIATOR OF RNA POLYMERASE II TRANSCRIPTION SUBUNIT 25"/>
    <property type="match status" value="1"/>
</dbReference>
<dbReference type="Pfam" id="PF11232">
    <property type="entry name" value="Med25"/>
    <property type="match status" value="1"/>
</dbReference>
<dbReference type="Pfam" id="PF11235">
    <property type="entry name" value="Med25_SD1"/>
    <property type="match status" value="1"/>
</dbReference>
<dbReference type="Pfam" id="PF11265">
    <property type="entry name" value="Med25_VWA"/>
    <property type="match status" value="1"/>
</dbReference>
<dbReference type="SUPFAM" id="SSF53300">
    <property type="entry name" value="vWA-like"/>
    <property type="match status" value="1"/>
</dbReference>
<organism>
    <name type="scientific">Bos taurus</name>
    <name type="common">Bovine</name>
    <dbReference type="NCBI Taxonomy" id="9913"/>
    <lineage>
        <taxon>Eukaryota</taxon>
        <taxon>Metazoa</taxon>
        <taxon>Chordata</taxon>
        <taxon>Craniata</taxon>
        <taxon>Vertebrata</taxon>
        <taxon>Euteleostomi</taxon>
        <taxon>Mammalia</taxon>
        <taxon>Eutheria</taxon>
        <taxon>Laurasiatheria</taxon>
        <taxon>Artiodactyla</taxon>
        <taxon>Ruminantia</taxon>
        <taxon>Pecora</taxon>
        <taxon>Bovidae</taxon>
        <taxon>Bovinae</taxon>
        <taxon>Bos</taxon>
    </lineage>
</organism>
<keyword id="KW-0010">Activator</keyword>
<keyword id="KW-0488">Methylation</keyword>
<keyword id="KW-0539">Nucleus</keyword>
<keyword id="KW-1185">Reference proteome</keyword>
<keyword id="KW-0804">Transcription</keyword>
<keyword id="KW-0805">Transcription regulation</keyword>
<feature type="chain" id="PRO_0000304951" description="Mediator of RNA polymerase II transcription subunit 25">
    <location>
        <begin position="1"/>
        <end position="746"/>
    </location>
</feature>
<feature type="region of interest" description="Interaction with the Mediator complex" evidence="1">
    <location>
        <begin position="1"/>
        <end position="226"/>
    </location>
</feature>
<feature type="region of interest" description="Disordered" evidence="3">
    <location>
        <begin position="233"/>
        <end position="273"/>
    </location>
</feature>
<feature type="region of interest" description="Disordered" evidence="3">
    <location>
        <begin position="298"/>
        <end position="390"/>
    </location>
</feature>
<feature type="region of interest" description="Interaction with VP16" evidence="1">
    <location>
        <begin position="389"/>
        <end position="543"/>
    </location>
</feature>
<feature type="region of interest" description="Interaction with CREBBP" evidence="1">
    <location>
        <begin position="395"/>
        <end position="545"/>
    </location>
</feature>
<feature type="region of interest" description="Disordered" evidence="3">
    <location>
        <begin position="548"/>
        <end position="746"/>
    </location>
</feature>
<feature type="region of interest" description="Interaction with RARA" evidence="1">
    <location>
        <begin position="563"/>
        <end position="652"/>
    </location>
</feature>
<feature type="region of interest" description="Interaction with RARA" evidence="1">
    <location>
        <begin position="639"/>
        <end position="706"/>
    </location>
</feature>
<feature type="short sequence motif" description="LXXLL motif">
    <location>
        <begin position="645"/>
        <end position="649"/>
    </location>
</feature>
<feature type="compositionally biased region" description="Pro residues" evidence="3">
    <location>
        <begin position="238"/>
        <end position="251"/>
    </location>
</feature>
<feature type="compositionally biased region" description="Low complexity" evidence="3">
    <location>
        <begin position="252"/>
        <end position="262"/>
    </location>
</feature>
<feature type="compositionally biased region" description="Pro residues" evidence="3">
    <location>
        <begin position="329"/>
        <end position="342"/>
    </location>
</feature>
<feature type="compositionally biased region" description="Low complexity" evidence="3">
    <location>
        <begin position="343"/>
        <end position="354"/>
    </location>
</feature>
<feature type="compositionally biased region" description="Low complexity" evidence="3">
    <location>
        <begin position="599"/>
        <end position="610"/>
    </location>
</feature>
<feature type="compositionally biased region" description="Pro residues" evidence="3">
    <location>
        <begin position="611"/>
        <end position="633"/>
    </location>
</feature>
<feature type="compositionally biased region" description="Pro residues" evidence="3">
    <location>
        <begin position="651"/>
        <end position="663"/>
    </location>
</feature>
<feature type="compositionally biased region" description="Pro residues" evidence="3">
    <location>
        <begin position="672"/>
        <end position="682"/>
    </location>
</feature>
<feature type="compositionally biased region" description="Pro residues" evidence="3">
    <location>
        <begin position="690"/>
        <end position="701"/>
    </location>
</feature>
<feature type="compositionally biased region" description="Acidic residues" evidence="3">
    <location>
        <begin position="737"/>
        <end position="746"/>
    </location>
</feature>
<feature type="modified residue" description="Asymmetric dimethylarginine" evidence="2">
    <location>
        <position position="724"/>
    </location>
</feature>